<dbReference type="EC" id="1.14.17.-"/>
<dbReference type="EMBL" id="AE014296">
    <property type="protein sequence ID" value="AAF49543.2"/>
    <property type="molecule type" value="Genomic_DNA"/>
</dbReference>
<dbReference type="EMBL" id="AY071594">
    <property type="protein sequence ID" value="AAL49216.1"/>
    <property type="molecule type" value="mRNA"/>
</dbReference>
<dbReference type="RefSeq" id="NP_001261921.1">
    <property type="nucleotide sequence ID" value="NM_001274992.2"/>
</dbReference>
<dbReference type="RefSeq" id="NP_648833.1">
    <property type="nucleotide sequence ID" value="NM_140576.4"/>
</dbReference>
<dbReference type="SMR" id="Q9VUY0"/>
<dbReference type="BioGRID" id="65067">
    <property type="interactions" value="1"/>
</dbReference>
<dbReference type="FunCoup" id="Q9VUY0">
    <property type="interactions" value="21"/>
</dbReference>
<dbReference type="STRING" id="7227.FBpp0075252"/>
<dbReference type="GlyGen" id="Q9VUY0">
    <property type="glycosylation" value="6 sites"/>
</dbReference>
<dbReference type="PaxDb" id="7227-FBpp0075252"/>
<dbReference type="DNASU" id="39758"/>
<dbReference type="EnsemblMetazoa" id="FBtr0075497">
    <property type="protein sequence ID" value="FBpp0075252"/>
    <property type="gene ID" value="FBgn0036565"/>
</dbReference>
<dbReference type="EnsemblMetazoa" id="FBtr0333599">
    <property type="protein sequence ID" value="FBpp0305776"/>
    <property type="gene ID" value="FBgn0036565"/>
</dbReference>
<dbReference type="GeneID" id="39758"/>
<dbReference type="KEGG" id="dme:Dmel_CG5235"/>
<dbReference type="UCSC" id="CG5235-RA">
    <property type="organism name" value="d. melanogaster"/>
</dbReference>
<dbReference type="AGR" id="FB:FBgn0036565"/>
<dbReference type="FlyBase" id="FBgn0036565">
    <property type="gene designation" value="CG5235"/>
</dbReference>
<dbReference type="VEuPathDB" id="VectorBase:FBgn0036565"/>
<dbReference type="eggNOG" id="KOG3568">
    <property type="taxonomic scope" value="Eukaryota"/>
</dbReference>
<dbReference type="GeneTree" id="ENSGT00530000063085"/>
<dbReference type="HOGENOM" id="CLU_017939_0_0_1"/>
<dbReference type="InParanoid" id="Q9VUY0"/>
<dbReference type="OMA" id="MITGKHM"/>
<dbReference type="OrthoDB" id="10003276at2759"/>
<dbReference type="PhylomeDB" id="Q9VUY0"/>
<dbReference type="BioGRID-ORCS" id="39758">
    <property type="hits" value="0 hits in 1 CRISPR screen"/>
</dbReference>
<dbReference type="GenomeRNAi" id="39758"/>
<dbReference type="PRO" id="PR:Q9VUY0"/>
<dbReference type="Proteomes" id="UP000000803">
    <property type="component" value="Chromosome 3L"/>
</dbReference>
<dbReference type="Bgee" id="FBgn0036565">
    <property type="expression patterns" value="Expressed in spermatogonium in testis and 37 other cell types or tissues"/>
</dbReference>
<dbReference type="ExpressionAtlas" id="Q9VUY0">
    <property type="expression patterns" value="baseline and differential"/>
</dbReference>
<dbReference type="GO" id="GO:0005615">
    <property type="term" value="C:extracellular space"/>
    <property type="evidence" value="ECO:0000318"/>
    <property type="project" value="GO_Central"/>
</dbReference>
<dbReference type="GO" id="GO:0030667">
    <property type="term" value="C:secretory granule membrane"/>
    <property type="evidence" value="ECO:0000318"/>
    <property type="project" value="GO_Central"/>
</dbReference>
<dbReference type="GO" id="GO:0005507">
    <property type="term" value="F:copper ion binding"/>
    <property type="evidence" value="ECO:0000318"/>
    <property type="project" value="GO_Central"/>
</dbReference>
<dbReference type="GO" id="GO:0004500">
    <property type="term" value="F:dopamine beta-monooxygenase activity"/>
    <property type="evidence" value="ECO:0000318"/>
    <property type="project" value="GO_Central"/>
</dbReference>
<dbReference type="GO" id="GO:0042420">
    <property type="term" value="P:dopamine catabolic process"/>
    <property type="evidence" value="ECO:0000318"/>
    <property type="project" value="GO_Central"/>
</dbReference>
<dbReference type="GO" id="GO:0042421">
    <property type="term" value="P:norepinephrine biosynthetic process"/>
    <property type="evidence" value="ECO:0000318"/>
    <property type="project" value="GO_Central"/>
</dbReference>
<dbReference type="GO" id="GO:0006589">
    <property type="term" value="P:octopamine biosynthetic process"/>
    <property type="evidence" value="ECO:0000318"/>
    <property type="project" value="GO_Central"/>
</dbReference>
<dbReference type="CDD" id="cd09631">
    <property type="entry name" value="DOMON_DOH"/>
    <property type="match status" value="1"/>
</dbReference>
<dbReference type="FunFam" id="2.60.120.310:FF:000004">
    <property type="entry name" value="DBH-like monooxygenase protein 1"/>
    <property type="match status" value="1"/>
</dbReference>
<dbReference type="FunFam" id="2.60.120.230:FF:000001">
    <property type="entry name" value="Monooxygenase, DBH-like 1"/>
    <property type="match status" value="1"/>
</dbReference>
<dbReference type="Gene3D" id="2.60.120.230">
    <property type="match status" value="1"/>
</dbReference>
<dbReference type="Gene3D" id="2.60.120.310">
    <property type="entry name" value="Copper type II, ascorbate-dependent monooxygenase, N-terminal domain"/>
    <property type="match status" value="1"/>
</dbReference>
<dbReference type="InterPro" id="IPR014784">
    <property type="entry name" value="Cu2_ascorb_mOase-like_C"/>
</dbReference>
<dbReference type="InterPro" id="IPR020611">
    <property type="entry name" value="Cu2_ascorb_mOase_CS-1"/>
</dbReference>
<dbReference type="InterPro" id="IPR000323">
    <property type="entry name" value="Cu2_ascorb_mOase_N"/>
</dbReference>
<dbReference type="InterPro" id="IPR036939">
    <property type="entry name" value="Cu2_ascorb_mOase_N_sf"/>
</dbReference>
<dbReference type="InterPro" id="IPR024548">
    <property type="entry name" value="Cu2_monoox_C"/>
</dbReference>
<dbReference type="InterPro" id="IPR000945">
    <property type="entry name" value="DBH-like"/>
</dbReference>
<dbReference type="InterPro" id="IPR045266">
    <property type="entry name" value="DOH_DOMON"/>
</dbReference>
<dbReference type="InterPro" id="IPR005018">
    <property type="entry name" value="DOMON_domain"/>
</dbReference>
<dbReference type="InterPro" id="IPR008977">
    <property type="entry name" value="PHM/PNGase_F_dom_sf"/>
</dbReference>
<dbReference type="InterPro" id="IPR028460">
    <property type="entry name" value="Tbh/DBH"/>
</dbReference>
<dbReference type="PANTHER" id="PTHR10157">
    <property type="entry name" value="DOPAMINE BETA HYDROXYLASE RELATED"/>
    <property type="match status" value="1"/>
</dbReference>
<dbReference type="PANTHER" id="PTHR10157:SF23">
    <property type="entry name" value="MOXD1 HOMOLOG 1"/>
    <property type="match status" value="1"/>
</dbReference>
<dbReference type="Pfam" id="PF03712">
    <property type="entry name" value="Cu2_monoox_C"/>
    <property type="match status" value="1"/>
</dbReference>
<dbReference type="Pfam" id="PF01082">
    <property type="entry name" value="Cu2_monooxygen"/>
    <property type="match status" value="1"/>
</dbReference>
<dbReference type="Pfam" id="PF03351">
    <property type="entry name" value="DOMON"/>
    <property type="match status" value="1"/>
</dbReference>
<dbReference type="PRINTS" id="PR00767">
    <property type="entry name" value="DBMONOXGNASE"/>
</dbReference>
<dbReference type="SMART" id="SM00664">
    <property type="entry name" value="DoH"/>
    <property type="match status" value="1"/>
</dbReference>
<dbReference type="SUPFAM" id="SSF49742">
    <property type="entry name" value="PHM/PNGase F"/>
    <property type="match status" value="2"/>
</dbReference>
<dbReference type="PROSITE" id="PS00084">
    <property type="entry name" value="CU2_MONOOXYGENASE_1"/>
    <property type="match status" value="1"/>
</dbReference>
<dbReference type="PROSITE" id="PS50836">
    <property type="entry name" value="DOMON"/>
    <property type="match status" value="1"/>
</dbReference>
<sequence length="698" mass="79456">MSVQDVLWIVLTVQLSFGLAYFENNQRTQDYDVDKNGSVHHKNWVRNEMMDSLGLYWLKWWINANENSIYFEVTVHTRGFAGLGFSKDGRLARADMVLMWVDDATGHPNVLDCHGALHPSSGPPLQDDTQNYDVLDGKQNGTHTILKFKRKIETCDPFDIPLSADTFKVLWSIGENDPIHGNLDWQGQSRGVKALQLFSPMFTKNSHSIEGIQKWDITVNNVTIDRSMDTLYWCKIVRLPELTGKQHIIGYEPLLSGKYERNVVHHMTLFECQSKIYSGSDPSSWDLWVRSAGTVCNSNLLTPRDWDSCSTPVAVWSLGSDGQFLPPHAGIPMGGASGVSYYMLEIHYDNPDGKESVDHSGFRIHYTPNLRTYDSGILISGVSISETQLIPPGQKKYRSVGICGPSCSSVMFPKDGIKIISGTLHSHQAGRTISLRHVRSGKELNPIIVDENYDYRHQKVHQLANETVVLPGDYLITDCSYETKYRKRPTFGGYSTKEEMCLTFITYYPKIEMSGCYSMTPVREFFEMFRVYQFYSLNMTDVENMFLYNSDYTDYSKQAKNATNKPNSGKTSKEDVIYQESLLNKLVISDPAEFHDRTFLSHLNQLPWHDPLFTKRVEQAFITGTHMTFCRVSKDSLSIPSEIIRYPEFTAYVKPPAACLNYLFTDNEELRSGSSQFFTDFTLSLLLLIQLGLQTTLL</sequence>
<reference key="1">
    <citation type="journal article" date="2000" name="Science">
        <title>The genome sequence of Drosophila melanogaster.</title>
        <authorList>
            <person name="Adams M.D."/>
            <person name="Celniker S.E."/>
            <person name="Holt R.A."/>
            <person name="Evans C.A."/>
            <person name="Gocayne J.D."/>
            <person name="Amanatides P.G."/>
            <person name="Scherer S.E."/>
            <person name="Li P.W."/>
            <person name="Hoskins R.A."/>
            <person name="Galle R.F."/>
            <person name="George R.A."/>
            <person name="Lewis S.E."/>
            <person name="Richards S."/>
            <person name="Ashburner M."/>
            <person name="Henderson S.N."/>
            <person name="Sutton G.G."/>
            <person name="Wortman J.R."/>
            <person name="Yandell M.D."/>
            <person name="Zhang Q."/>
            <person name="Chen L.X."/>
            <person name="Brandon R.C."/>
            <person name="Rogers Y.-H.C."/>
            <person name="Blazej R.G."/>
            <person name="Champe M."/>
            <person name="Pfeiffer B.D."/>
            <person name="Wan K.H."/>
            <person name="Doyle C."/>
            <person name="Baxter E.G."/>
            <person name="Helt G."/>
            <person name="Nelson C.R."/>
            <person name="Miklos G.L.G."/>
            <person name="Abril J.F."/>
            <person name="Agbayani A."/>
            <person name="An H.-J."/>
            <person name="Andrews-Pfannkoch C."/>
            <person name="Baldwin D."/>
            <person name="Ballew R.M."/>
            <person name="Basu A."/>
            <person name="Baxendale J."/>
            <person name="Bayraktaroglu L."/>
            <person name="Beasley E.M."/>
            <person name="Beeson K.Y."/>
            <person name="Benos P.V."/>
            <person name="Berman B.P."/>
            <person name="Bhandari D."/>
            <person name="Bolshakov S."/>
            <person name="Borkova D."/>
            <person name="Botchan M.R."/>
            <person name="Bouck J."/>
            <person name="Brokstein P."/>
            <person name="Brottier P."/>
            <person name="Burtis K.C."/>
            <person name="Busam D.A."/>
            <person name="Butler H."/>
            <person name="Cadieu E."/>
            <person name="Center A."/>
            <person name="Chandra I."/>
            <person name="Cherry J.M."/>
            <person name="Cawley S."/>
            <person name="Dahlke C."/>
            <person name="Davenport L.B."/>
            <person name="Davies P."/>
            <person name="de Pablos B."/>
            <person name="Delcher A."/>
            <person name="Deng Z."/>
            <person name="Mays A.D."/>
            <person name="Dew I."/>
            <person name="Dietz S.M."/>
            <person name="Dodson K."/>
            <person name="Doup L.E."/>
            <person name="Downes M."/>
            <person name="Dugan-Rocha S."/>
            <person name="Dunkov B.C."/>
            <person name="Dunn P."/>
            <person name="Durbin K.J."/>
            <person name="Evangelista C.C."/>
            <person name="Ferraz C."/>
            <person name="Ferriera S."/>
            <person name="Fleischmann W."/>
            <person name="Fosler C."/>
            <person name="Gabrielian A.E."/>
            <person name="Garg N.S."/>
            <person name="Gelbart W.M."/>
            <person name="Glasser K."/>
            <person name="Glodek A."/>
            <person name="Gong F."/>
            <person name="Gorrell J.H."/>
            <person name="Gu Z."/>
            <person name="Guan P."/>
            <person name="Harris M."/>
            <person name="Harris N.L."/>
            <person name="Harvey D.A."/>
            <person name="Heiman T.J."/>
            <person name="Hernandez J.R."/>
            <person name="Houck J."/>
            <person name="Hostin D."/>
            <person name="Houston K.A."/>
            <person name="Howland T.J."/>
            <person name="Wei M.-H."/>
            <person name="Ibegwam C."/>
            <person name="Jalali M."/>
            <person name="Kalush F."/>
            <person name="Karpen G.H."/>
            <person name="Ke Z."/>
            <person name="Kennison J.A."/>
            <person name="Ketchum K.A."/>
            <person name="Kimmel B.E."/>
            <person name="Kodira C.D."/>
            <person name="Kraft C.L."/>
            <person name="Kravitz S."/>
            <person name="Kulp D."/>
            <person name="Lai Z."/>
            <person name="Lasko P."/>
            <person name="Lei Y."/>
            <person name="Levitsky A.A."/>
            <person name="Li J.H."/>
            <person name="Li Z."/>
            <person name="Liang Y."/>
            <person name="Lin X."/>
            <person name="Liu X."/>
            <person name="Mattei B."/>
            <person name="McIntosh T.C."/>
            <person name="McLeod M.P."/>
            <person name="McPherson D."/>
            <person name="Merkulov G."/>
            <person name="Milshina N.V."/>
            <person name="Mobarry C."/>
            <person name="Morris J."/>
            <person name="Moshrefi A."/>
            <person name="Mount S.M."/>
            <person name="Moy M."/>
            <person name="Murphy B."/>
            <person name="Murphy L."/>
            <person name="Muzny D.M."/>
            <person name="Nelson D.L."/>
            <person name="Nelson D.R."/>
            <person name="Nelson K.A."/>
            <person name="Nixon K."/>
            <person name="Nusskern D.R."/>
            <person name="Pacleb J.M."/>
            <person name="Palazzolo M."/>
            <person name="Pittman G.S."/>
            <person name="Pan S."/>
            <person name="Pollard J."/>
            <person name="Puri V."/>
            <person name="Reese M.G."/>
            <person name="Reinert K."/>
            <person name="Remington K."/>
            <person name="Saunders R.D.C."/>
            <person name="Scheeler F."/>
            <person name="Shen H."/>
            <person name="Shue B.C."/>
            <person name="Siden-Kiamos I."/>
            <person name="Simpson M."/>
            <person name="Skupski M.P."/>
            <person name="Smith T.J."/>
            <person name="Spier E."/>
            <person name="Spradling A.C."/>
            <person name="Stapleton M."/>
            <person name="Strong R."/>
            <person name="Sun E."/>
            <person name="Svirskas R."/>
            <person name="Tector C."/>
            <person name="Turner R."/>
            <person name="Venter E."/>
            <person name="Wang A.H."/>
            <person name="Wang X."/>
            <person name="Wang Z.-Y."/>
            <person name="Wassarman D.A."/>
            <person name="Weinstock G.M."/>
            <person name="Weissenbach J."/>
            <person name="Williams S.M."/>
            <person name="Woodage T."/>
            <person name="Worley K.C."/>
            <person name="Wu D."/>
            <person name="Yang S."/>
            <person name="Yao Q.A."/>
            <person name="Ye J."/>
            <person name="Yeh R.-F."/>
            <person name="Zaveri J.S."/>
            <person name="Zhan M."/>
            <person name="Zhang G."/>
            <person name="Zhao Q."/>
            <person name="Zheng L."/>
            <person name="Zheng X.H."/>
            <person name="Zhong F.N."/>
            <person name="Zhong W."/>
            <person name="Zhou X."/>
            <person name="Zhu S.C."/>
            <person name="Zhu X."/>
            <person name="Smith H.O."/>
            <person name="Gibbs R.A."/>
            <person name="Myers E.W."/>
            <person name="Rubin G.M."/>
            <person name="Venter J.C."/>
        </authorList>
    </citation>
    <scope>NUCLEOTIDE SEQUENCE [LARGE SCALE GENOMIC DNA]</scope>
    <source>
        <strain>Berkeley</strain>
    </source>
</reference>
<reference key="2">
    <citation type="journal article" date="2002" name="Genome Biol.">
        <title>Annotation of the Drosophila melanogaster euchromatic genome: a systematic review.</title>
        <authorList>
            <person name="Misra S."/>
            <person name="Crosby M.A."/>
            <person name="Mungall C.J."/>
            <person name="Matthews B.B."/>
            <person name="Campbell K.S."/>
            <person name="Hradecky P."/>
            <person name="Huang Y."/>
            <person name="Kaminker J.S."/>
            <person name="Millburn G.H."/>
            <person name="Prochnik S.E."/>
            <person name="Smith C.D."/>
            <person name="Tupy J.L."/>
            <person name="Whitfield E.J."/>
            <person name="Bayraktaroglu L."/>
            <person name="Berman B.P."/>
            <person name="Bettencourt B.R."/>
            <person name="Celniker S.E."/>
            <person name="de Grey A.D.N.J."/>
            <person name="Drysdale R.A."/>
            <person name="Harris N.L."/>
            <person name="Richter J."/>
            <person name="Russo S."/>
            <person name="Schroeder A.J."/>
            <person name="Shu S.Q."/>
            <person name="Stapleton M."/>
            <person name="Yamada C."/>
            <person name="Ashburner M."/>
            <person name="Gelbart W.M."/>
            <person name="Rubin G.M."/>
            <person name="Lewis S.E."/>
        </authorList>
    </citation>
    <scope>GENOME REANNOTATION</scope>
    <source>
        <strain>Berkeley</strain>
    </source>
</reference>
<reference key="3">
    <citation type="journal article" date="2002" name="Genome Biol.">
        <title>A Drosophila full-length cDNA resource.</title>
        <authorList>
            <person name="Stapleton M."/>
            <person name="Carlson J.W."/>
            <person name="Brokstein P."/>
            <person name="Yu C."/>
            <person name="Champe M."/>
            <person name="George R.A."/>
            <person name="Guarin H."/>
            <person name="Kronmiller B."/>
            <person name="Pacleb J.M."/>
            <person name="Park S."/>
            <person name="Wan K.H."/>
            <person name="Rubin G.M."/>
            <person name="Celniker S.E."/>
        </authorList>
    </citation>
    <scope>NUCLEOTIDE SEQUENCE [LARGE SCALE MRNA]</scope>
    <source>
        <strain>Berkeley</strain>
        <tissue>Embryo</tissue>
    </source>
</reference>
<reference key="4">
    <citation type="journal article" date="2002" name="Mech. Dev.">
        <title>Identification of novel Drosophila neural precursor genes using a differential embryonic head cDNA screen.</title>
        <authorList>
            <person name="Brody T."/>
            <person name="Stivers C."/>
            <person name="Nagle J."/>
            <person name="Odenwald W.F."/>
        </authorList>
    </citation>
    <scope>DEVELOPMENTAL STAGE</scope>
</reference>
<accession>Q9VUY0</accession>
<accession>Q8SYE9</accession>
<feature type="signal peptide" evidence="2">
    <location>
        <begin position="1"/>
        <end position="20"/>
    </location>
</feature>
<feature type="chain" id="PRO_0000305221" description="MOXD1 homolog 1">
    <location>
        <begin position="21"/>
        <end position="698"/>
    </location>
</feature>
<feature type="domain" description="DOMON" evidence="3">
    <location>
        <begin position="54"/>
        <end position="174"/>
    </location>
</feature>
<feature type="active site" evidence="2">
    <location>
        <position position="232"/>
    </location>
</feature>
<feature type="active site" evidence="2">
    <location>
        <position position="425"/>
    </location>
</feature>
<feature type="binding site" evidence="1">
    <location>
        <position position="265"/>
    </location>
    <ligand>
        <name>Cu cation</name>
        <dbReference type="ChEBI" id="CHEBI:23378"/>
        <label>A</label>
    </ligand>
</feature>
<feature type="binding site" evidence="1">
    <location>
        <position position="266"/>
    </location>
    <ligand>
        <name>Cu cation</name>
        <dbReference type="ChEBI" id="CHEBI:23378"/>
        <label>A</label>
    </ligand>
</feature>
<feature type="binding site" evidence="1">
    <location>
        <position position="347"/>
    </location>
    <ligand>
        <name>Cu cation</name>
        <dbReference type="ChEBI" id="CHEBI:23378"/>
        <label>A</label>
    </ligand>
</feature>
<feature type="binding site" evidence="1">
    <location>
        <position position="425"/>
    </location>
    <ligand>
        <name>Cu cation</name>
        <dbReference type="ChEBI" id="CHEBI:23378"/>
        <label>B</label>
    </ligand>
</feature>
<feature type="binding site" evidence="1">
    <location>
        <position position="427"/>
    </location>
    <ligand>
        <name>Cu cation</name>
        <dbReference type="ChEBI" id="CHEBI:23378"/>
        <label>B</label>
    </ligand>
</feature>
<feature type="binding site" evidence="1">
    <location>
        <position position="500"/>
    </location>
    <ligand>
        <name>Cu cation</name>
        <dbReference type="ChEBI" id="CHEBI:23378"/>
        <label>B</label>
    </ligand>
</feature>
<feature type="glycosylation site" description="N-linked (GlcNAc...) asparagine" evidence="2">
    <location>
        <position position="36"/>
    </location>
</feature>
<feature type="glycosylation site" description="N-linked (GlcNAc...) asparagine" evidence="2">
    <location>
        <position position="140"/>
    </location>
</feature>
<feature type="glycosylation site" description="N-linked (GlcNAc...) asparagine" evidence="2">
    <location>
        <position position="221"/>
    </location>
</feature>
<feature type="glycosylation site" description="N-linked (GlcNAc...) asparagine" evidence="2">
    <location>
        <position position="465"/>
    </location>
</feature>
<feature type="glycosylation site" description="N-linked (GlcNAc...) asparagine" evidence="2">
    <location>
        <position position="538"/>
    </location>
</feature>
<feature type="glycosylation site" description="N-linked (GlcNAc...) asparagine" evidence="2">
    <location>
        <position position="561"/>
    </location>
</feature>
<feature type="disulfide bond" evidence="1">
    <location>
        <begin position="272"/>
        <end position="309"/>
    </location>
</feature>
<feature type="disulfide bond" evidence="1">
    <location>
        <begin position="403"/>
        <end position="516"/>
    </location>
</feature>
<feature type="disulfide bond" evidence="1">
    <location>
        <begin position="479"/>
        <end position="501"/>
    </location>
</feature>
<name>MOX11_DROME</name>
<keyword id="KW-0186">Copper</keyword>
<keyword id="KW-1015">Disulfide bond</keyword>
<keyword id="KW-0325">Glycoprotein</keyword>
<keyword id="KW-0479">Metal-binding</keyword>
<keyword id="KW-0503">Monooxygenase</keyword>
<keyword id="KW-0560">Oxidoreductase</keyword>
<keyword id="KW-1185">Reference proteome</keyword>
<keyword id="KW-0964">Secreted</keyword>
<keyword id="KW-0732">Signal</keyword>
<evidence type="ECO:0000250" key="1"/>
<evidence type="ECO:0000255" key="2"/>
<evidence type="ECO:0000255" key="3">
    <source>
        <dbReference type="PROSITE-ProRule" id="PRU00246"/>
    </source>
</evidence>
<evidence type="ECO:0000269" key="4">
    <source>
    </source>
</evidence>
<evidence type="ECO:0000305" key="5"/>
<organism>
    <name type="scientific">Drosophila melanogaster</name>
    <name type="common">Fruit fly</name>
    <dbReference type="NCBI Taxonomy" id="7227"/>
    <lineage>
        <taxon>Eukaryota</taxon>
        <taxon>Metazoa</taxon>
        <taxon>Ecdysozoa</taxon>
        <taxon>Arthropoda</taxon>
        <taxon>Hexapoda</taxon>
        <taxon>Insecta</taxon>
        <taxon>Pterygota</taxon>
        <taxon>Neoptera</taxon>
        <taxon>Endopterygota</taxon>
        <taxon>Diptera</taxon>
        <taxon>Brachycera</taxon>
        <taxon>Muscomorpha</taxon>
        <taxon>Ephydroidea</taxon>
        <taxon>Drosophilidae</taxon>
        <taxon>Drosophila</taxon>
        <taxon>Sophophora</taxon>
    </lineage>
</organism>
<protein>
    <recommendedName>
        <fullName>MOXD1 homolog 1</fullName>
        <ecNumber>1.14.17.-</ecNumber>
    </recommendedName>
</protein>
<proteinExistence type="evidence at transcript level"/>
<comment type="cofactor">
    <cofactor evidence="1">
        <name>Cu(2+)</name>
        <dbReference type="ChEBI" id="CHEBI:29036"/>
    </cofactor>
    <text evidence="1">Binds 2 copper ions per subunit.</text>
</comment>
<comment type="subcellular location">
    <subcellularLocation>
        <location evidence="5">Secreted</location>
    </subcellularLocation>
</comment>
<comment type="developmental stage">
    <text evidence="4">Maternally transcribed. During neurogenesis, expression is reactivated in neuroblasts and ganglion mother cells, and disappears as neurons differentiate.</text>
</comment>
<comment type="similarity">
    <text evidence="5">Belongs to the copper type II ascorbate-dependent monooxygenase family.</text>
</comment>
<gene>
    <name type="ORF">CG5235</name>
</gene>